<feature type="chain" id="PRO_0000300351" description="DNA-directed RNA polymerase subunit beta">
    <location>
        <begin position="1"/>
        <end position="1172"/>
    </location>
</feature>
<dbReference type="EC" id="2.7.7.6" evidence="1"/>
<dbReference type="EMBL" id="CP000518">
    <property type="protein sequence ID" value="ABL90201.1"/>
    <property type="molecule type" value="Genomic_DNA"/>
</dbReference>
<dbReference type="SMR" id="A1UBJ3"/>
<dbReference type="STRING" id="189918.Mkms_0987"/>
<dbReference type="KEGG" id="mkm:Mkms_0987"/>
<dbReference type="HOGENOM" id="CLU_000524_4_3_11"/>
<dbReference type="OrthoDB" id="9803954at2"/>
<dbReference type="GO" id="GO:0000428">
    <property type="term" value="C:DNA-directed RNA polymerase complex"/>
    <property type="evidence" value="ECO:0007669"/>
    <property type="project" value="UniProtKB-KW"/>
</dbReference>
<dbReference type="GO" id="GO:0003677">
    <property type="term" value="F:DNA binding"/>
    <property type="evidence" value="ECO:0007669"/>
    <property type="project" value="UniProtKB-UniRule"/>
</dbReference>
<dbReference type="GO" id="GO:0003899">
    <property type="term" value="F:DNA-directed RNA polymerase activity"/>
    <property type="evidence" value="ECO:0007669"/>
    <property type="project" value="UniProtKB-UniRule"/>
</dbReference>
<dbReference type="GO" id="GO:0032549">
    <property type="term" value="F:ribonucleoside binding"/>
    <property type="evidence" value="ECO:0007669"/>
    <property type="project" value="InterPro"/>
</dbReference>
<dbReference type="GO" id="GO:0006351">
    <property type="term" value="P:DNA-templated transcription"/>
    <property type="evidence" value="ECO:0007669"/>
    <property type="project" value="UniProtKB-UniRule"/>
</dbReference>
<dbReference type="CDD" id="cd00653">
    <property type="entry name" value="RNA_pol_B_RPB2"/>
    <property type="match status" value="1"/>
</dbReference>
<dbReference type="FunFam" id="2.40.50.150:FF:000001">
    <property type="entry name" value="DNA-directed RNA polymerase subunit beta"/>
    <property type="match status" value="1"/>
</dbReference>
<dbReference type="FunFam" id="3.90.1800.10:FF:000005">
    <property type="entry name" value="DNA-directed RNA polymerase subunit beta"/>
    <property type="match status" value="1"/>
</dbReference>
<dbReference type="Gene3D" id="2.40.50.100">
    <property type="match status" value="1"/>
</dbReference>
<dbReference type="Gene3D" id="2.40.50.150">
    <property type="match status" value="1"/>
</dbReference>
<dbReference type="Gene3D" id="3.90.1100.10">
    <property type="match status" value="1"/>
</dbReference>
<dbReference type="Gene3D" id="2.30.150.10">
    <property type="entry name" value="DNA-directed RNA polymerase, beta subunit, external 1 domain"/>
    <property type="match status" value="1"/>
</dbReference>
<dbReference type="Gene3D" id="2.40.270.10">
    <property type="entry name" value="DNA-directed RNA polymerase, subunit 2, domain 6"/>
    <property type="match status" value="1"/>
</dbReference>
<dbReference type="Gene3D" id="3.90.1800.10">
    <property type="entry name" value="RNA polymerase alpha subunit dimerisation domain"/>
    <property type="match status" value="1"/>
</dbReference>
<dbReference type="Gene3D" id="3.90.1110.10">
    <property type="entry name" value="RNA polymerase Rpb2, domain 2"/>
    <property type="match status" value="1"/>
</dbReference>
<dbReference type="HAMAP" id="MF_01321">
    <property type="entry name" value="RNApol_bact_RpoB"/>
    <property type="match status" value="1"/>
</dbReference>
<dbReference type="InterPro" id="IPR042107">
    <property type="entry name" value="DNA-dir_RNA_pol_bsu_ext_1_sf"/>
</dbReference>
<dbReference type="InterPro" id="IPR019462">
    <property type="entry name" value="DNA-dir_RNA_pol_bsu_external_1"/>
</dbReference>
<dbReference type="InterPro" id="IPR015712">
    <property type="entry name" value="DNA-dir_RNA_pol_su2"/>
</dbReference>
<dbReference type="InterPro" id="IPR007120">
    <property type="entry name" value="DNA-dir_RNAP_su2_dom"/>
</dbReference>
<dbReference type="InterPro" id="IPR037033">
    <property type="entry name" value="DNA-dir_RNAP_su2_hyb_sf"/>
</dbReference>
<dbReference type="InterPro" id="IPR010243">
    <property type="entry name" value="RNA_pol_bsu_bac"/>
</dbReference>
<dbReference type="InterPro" id="IPR007121">
    <property type="entry name" value="RNA_pol_bsu_CS"/>
</dbReference>
<dbReference type="InterPro" id="IPR007644">
    <property type="entry name" value="RNA_pol_bsu_protrusion"/>
</dbReference>
<dbReference type="InterPro" id="IPR007642">
    <property type="entry name" value="RNA_pol_Rpb2_2"/>
</dbReference>
<dbReference type="InterPro" id="IPR037034">
    <property type="entry name" value="RNA_pol_Rpb2_2_sf"/>
</dbReference>
<dbReference type="InterPro" id="IPR007645">
    <property type="entry name" value="RNA_pol_Rpb2_3"/>
</dbReference>
<dbReference type="InterPro" id="IPR007641">
    <property type="entry name" value="RNA_pol_Rpb2_7"/>
</dbReference>
<dbReference type="InterPro" id="IPR014724">
    <property type="entry name" value="RNA_pol_RPB2_OB-fold"/>
</dbReference>
<dbReference type="NCBIfam" id="NF001616">
    <property type="entry name" value="PRK00405.1"/>
    <property type="match status" value="1"/>
</dbReference>
<dbReference type="NCBIfam" id="TIGR02013">
    <property type="entry name" value="rpoB"/>
    <property type="match status" value="1"/>
</dbReference>
<dbReference type="PANTHER" id="PTHR20856">
    <property type="entry name" value="DNA-DIRECTED RNA POLYMERASE I SUBUNIT 2"/>
    <property type="match status" value="1"/>
</dbReference>
<dbReference type="Pfam" id="PF04563">
    <property type="entry name" value="RNA_pol_Rpb2_1"/>
    <property type="match status" value="1"/>
</dbReference>
<dbReference type="Pfam" id="PF04561">
    <property type="entry name" value="RNA_pol_Rpb2_2"/>
    <property type="match status" value="1"/>
</dbReference>
<dbReference type="Pfam" id="PF04565">
    <property type="entry name" value="RNA_pol_Rpb2_3"/>
    <property type="match status" value="1"/>
</dbReference>
<dbReference type="Pfam" id="PF10385">
    <property type="entry name" value="RNA_pol_Rpb2_45"/>
    <property type="match status" value="1"/>
</dbReference>
<dbReference type="Pfam" id="PF00562">
    <property type="entry name" value="RNA_pol_Rpb2_6"/>
    <property type="match status" value="1"/>
</dbReference>
<dbReference type="Pfam" id="PF04560">
    <property type="entry name" value="RNA_pol_Rpb2_7"/>
    <property type="match status" value="1"/>
</dbReference>
<dbReference type="SUPFAM" id="SSF64484">
    <property type="entry name" value="beta and beta-prime subunits of DNA dependent RNA-polymerase"/>
    <property type="match status" value="1"/>
</dbReference>
<dbReference type="PROSITE" id="PS01166">
    <property type="entry name" value="RNA_POL_BETA"/>
    <property type="match status" value="1"/>
</dbReference>
<keyword id="KW-0240">DNA-directed RNA polymerase</keyword>
<keyword id="KW-0548">Nucleotidyltransferase</keyword>
<keyword id="KW-0804">Transcription</keyword>
<keyword id="KW-0808">Transferase</keyword>
<sequence>MLEGCILAVSSQSKSAKAITNNSVPGAPNRISFAKLREPLEVPGLLDVQTESFDWLIGADSWRQRATARGDVNPTGGLEEVLTELSPIEDFSGSMSLSFSDPRFDEVKAPVDECKDKDMTYAAPLFVTAEFINNNTGEIKSQTVFMGDFPMMTEKGTFIINGTERVVVSQLVRSPGVYFDESIDKSTEKTLHSVKVIPGRGAWLEFDVDKRDTVGVRIDRKRRQPVTVLLKALGWTNEQITERFGFSEIMMSTLEKDNTAGTDEALLDIYRKLRPGEPPTKESAQTLLENLFFKEKRYDLARVGRYKVNKKLGLNTDKPITSSTLTEEDVVATIEYLVRLHQGDTVMTVPGGVEVPVEVDDIDHFGNRRLRTVGELIQNQIRVGLSRMERVVRERMTTQDVEAITPQTLINIRPVVAAIKEFFGTSQLSQFMDQNNPLSGLTHKRRLSALGPGGLSRERAGLEVRDVHSSHYGRMCPIETPEGPNIGLIGSLSVYARVNPFGFIETPYRKVENGVVTDQIDYLTADEEDRHVVAQANSPLDDEGHFTEDRVLVRRKGGEVEFVSATEVDYMDVSPRQMVSVATAMIPFLEHDDANRALMGANMQRQAVPLVRSEAPLVGTGMELRAAIDAGDVVVSEKAGVVEEVSADYITVMADDGTRHTYRMRKFARSNHGTCANQRPIVDAGQRVEAGQVVADGPCTQNGEMALGKNLLVAIMPWEGHNYEDAIILSNRLVEEDVLTSIHIEEHEIDARDTKLGAEEITRDIPNVSDEVLADLDERGIVRIGAEVRDGDILVGKVTPKGETELTPEERLLRAIFGEKAREVRDTSLKVPHGESGKVIGIRVFSREDDDELPAGVNELVRVYVAQKRKISDGDKLAGRHGNKGVIGKILPVEDMPFLPDGTPVDIILNTHGVPRRMNIGQILETHLGWVAKAGWNINVAGADGVPDWAEKLPEELYSAPSDSIVATPVFDGARENELSGLLASTLPNRDGDVMVNEDGKAELFDGRSGEPFPYPVTVGYMYILKLHHLVDDKIHARSTGPYSMITQQPLGGKAQFGGQRFGEMECWAMQAYGAAYTLQELLTIKSDDTVGRVKVYEAIVKGENIPEPGIPESFKVLLKELQSLCLNVEVLSSDGAAIEMRDGDDEDLERAAANLGINLSRNESASVEDLA</sequence>
<protein>
    <recommendedName>
        <fullName evidence="1">DNA-directed RNA polymerase subunit beta</fullName>
        <shortName evidence="1">RNAP subunit beta</shortName>
        <ecNumber evidence="1">2.7.7.6</ecNumber>
    </recommendedName>
    <alternativeName>
        <fullName evidence="1">RNA polymerase subunit beta</fullName>
    </alternativeName>
    <alternativeName>
        <fullName evidence="1">Transcriptase subunit beta</fullName>
    </alternativeName>
</protein>
<comment type="function">
    <text evidence="1">DNA-dependent RNA polymerase catalyzes the transcription of DNA into RNA using the four ribonucleoside triphosphates as substrates.</text>
</comment>
<comment type="catalytic activity">
    <reaction evidence="1">
        <text>RNA(n) + a ribonucleoside 5'-triphosphate = RNA(n+1) + diphosphate</text>
        <dbReference type="Rhea" id="RHEA:21248"/>
        <dbReference type="Rhea" id="RHEA-COMP:14527"/>
        <dbReference type="Rhea" id="RHEA-COMP:17342"/>
        <dbReference type="ChEBI" id="CHEBI:33019"/>
        <dbReference type="ChEBI" id="CHEBI:61557"/>
        <dbReference type="ChEBI" id="CHEBI:140395"/>
        <dbReference type="EC" id="2.7.7.6"/>
    </reaction>
</comment>
<comment type="subunit">
    <text evidence="1">The RNAP catalytic core consists of 2 alpha, 1 beta, 1 beta' and 1 omega subunit. When a sigma factor is associated with the core the holoenzyme is formed, which can initiate transcription.</text>
</comment>
<comment type="similarity">
    <text evidence="1">Belongs to the RNA polymerase beta chain family.</text>
</comment>
<name>RPOB_MYCSK</name>
<organism>
    <name type="scientific">Mycobacterium sp. (strain KMS)</name>
    <dbReference type="NCBI Taxonomy" id="189918"/>
    <lineage>
        <taxon>Bacteria</taxon>
        <taxon>Bacillati</taxon>
        <taxon>Actinomycetota</taxon>
        <taxon>Actinomycetes</taxon>
        <taxon>Mycobacteriales</taxon>
        <taxon>Mycobacteriaceae</taxon>
        <taxon>Mycobacterium</taxon>
    </lineage>
</organism>
<proteinExistence type="inferred from homology"/>
<evidence type="ECO:0000255" key="1">
    <source>
        <dbReference type="HAMAP-Rule" id="MF_01321"/>
    </source>
</evidence>
<reference key="1">
    <citation type="submission" date="2006-12" db="EMBL/GenBank/DDBJ databases">
        <title>Complete sequence of chromosome of Mycobacterium sp. KMS.</title>
        <authorList>
            <consortium name="US DOE Joint Genome Institute"/>
            <person name="Copeland A."/>
            <person name="Lucas S."/>
            <person name="Lapidus A."/>
            <person name="Barry K."/>
            <person name="Detter J.C."/>
            <person name="Glavina del Rio T."/>
            <person name="Hammon N."/>
            <person name="Israni S."/>
            <person name="Dalin E."/>
            <person name="Tice H."/>
            <person name="Pitluck S."/>
            <person name="Kiss H."/>
            <person name="Brettin T."/>
            <person name="Bruce D."/>
            <person name="Han C."/>
            <person name="Tapia R."/>
            <person name="Gilna P."/>
            <person name="Schmutz J."/>
            <person name="Larimer F."/>
            <person name="Land M."/>
            <person name="Hauser L."/>
            <person name="Kyrpides N."/>
            <person name="Mikhailova N."/>
            <person name="Miller C.D."/>
            <person name="Richardson P."/>
        </authorList>
    </citation>
    <scope>NUCLEOTIDE SEQUENCE [LARGE SCALE GENOMIC DNA]</scope>
    <source>
        <strain>KMS</strain>
    </source>
</reference>
<gene>
    <name evidence="1" type="primary">rpoB</name>
    <name type="ordered locus">Mkms_0987</name>
</gene>
<accession>A1UBJ3</accession>